<proteinExistence type="inferred from homology"/>
<sequence length="199" mass="22493">MAEEQVLNTHNASILLSAANKSHYPQDDLPEIALAGRSNVGKSSFINTILGRKNLARTSSKPGKTQLLNFFNIDDKLRFVDVPGYGYAKVSKSERAKWGKMIEEYLTSRDNLRAVVSLVDLRHAPSKEDIQMYDFLKYYDIPVIVVATKADKIPRGKWNKHESVVKKALNFDKSDTFIVFSSVERIGIDDSWDAILEQV</sequence>
<gene>
    <name evidence="1" type="primary">engB</name>
    <name type="ordered locus">SPy_0886</name>
    <name type="ordered locus">M5005_Spy0692</name>
</gene>
<reference key="1">
    <citation type="journal article" date="2001" name="Proc. Natl. Acad. Sci. U.S.A.">
        <title>Complete genome sequence of an M1 strain of Streptococcus pyogenes.</title>
        <authorList>
            <person name="Ferretti J.J."/>
            <person name="McShan W.M."/>
            <person name="Ajdic D.J."/>
            <person name="Savic D.J."/>
            <person name="Savic G."/>
            <person name="Lyon K."/>
            <person name="Primeaux C."/>
            <person name="Sezate S."/>
            <person name="Suvorov A.N."/>
            <person name="Kenton S."/>
            <person name="Lai H.S."/>
            <person name="Lin S.P."/>
            <person name="Qian Y."/>
            <person name="Jia H.G."/>
            <person name="Najar F.Z."/>
            <person name="Ren Q."/>
            <person name="Zhu H."/>
            <person name="Song L."/>
            <person name="White J."/>
            <person name="Yuan X."/>
            <person name="Clifton S.W."/>
            <person name="Roe B.A."/>
            <person name="McLaughlin R.E."/>
        </authorList>
    </citation>
    <scope>NUCLEOTIDE SEQUENCE [LARGE SCALE GENOMIC DNA]</scope>
    <source>
        <strain>ATCC 700294 / SF370 / Serotype M1</strain>
    </source>
</reference>
<reference key="2">
    <citation type="journal article" date="2005" name="J. Infect. Dis.">
        <title>Evolutionary origin and emergence of a highly successful clone of serotype M1 group A Streptococcus involved multiple horizontal gene transfer events.</title>
        <authorList>
            <person name="Sumby P."/>
            <person name="Porcella S.F."/>
            <person name="Madrigal A.G."/>
            <person name="Barbian K.D."/>
            <person name="Virtaneva K."/>
            <person name="Ricklefs S.M."/>
            <person name="Sturdevant D.E."/>
            <person name="Graham M.R."/>
            <person name="Vuopio-Varkila J."/>
            <person name="Hoe N.P."/>
            <person name="Musser J.M."/>
        </authorList>
    </citation>
    <scope>NUCLEOTIDE SEQUENCE [LARGE SCALE GENOMIC DNA]</scope>
    <source>
        <strain>ATCC BAA-947 / MGAS5005 / Serotype M1</strain>
    </source>
</reference>
<protein>
    <recommendedName>
        <fullName evidence="1">Probable GTP-binding protein EngB</fullName>
    </recommendedName>
</protein>
<organism>
    <name type="scientific">Streptococcus pyogenes serotype M1</name>
    <dbReference type="NCBI Taxonomy" id="301447"/>
    <lineage>
        <taxon>Bacteria</taxon>
        <taxon>Bacillati</taxon>
        <taxon>Bacillota</taxon>
        <taxon>Bacilli</taxon>
        <taxon>Lactobacillales</taxon>
        <taxon>Streptococcaceae</taxon>
        <taxon>Streptococcus</taxon>
    </lineage>
</organism>
<keyword id="KW-0131">Cell cycle</keyword>
<keyword id="KW-0132">Cell division</keyword>
<keyword id="KW-0342">GTP-binding</keyword>
<keyword id="KW-0460">Magnesium</keyword>
<keyword id="KW-0479">Metal-binding</keyword>
<keyword id="KW-0547">Nucleotide-binding</keyword>
<keyword id="KW-1185">Reference proteome</keyword>
<keyword id="KW-0717">Septation</keyword>
<feature type="chain" id="PRO_0000157790" description="Probable GTP-binding protein EngB">
    <location>
        <begin position="1"/>
        <end position="199"/>
    </location>
</feature>
<feature type="domain" description="EngB-type G" evidence="1">
    <location>
        <begin position="28"/>
        <end position="199"/>
    </location>
</feature>
<feature type="binding site" evidence="1">
    <location>
        <begin position="36"/>
        <end position="43"/>
    </location>
    <ligand>
        <name>GTP</name>
        <dbReference type="ChEBI" id="CHEBI:37565"/>
    </ligand>
</feature>
<feature type="binding site" evidence="1">
    <location>
        <position position="43"/>
    </location>
    <ligand>
        <name>Mg(2+)</name>
        <dbReference type="ChEBI" id="CHEBI:18420"/>
    </ligand>
</feature>
<feature type="binding site" evidence="1">
    <location>
        <begin position="63"/>
        <end position="67"/>
    </location>
    <ligand>
        <name>GTP</name>
        <dbReference type="ChEBI" id="CHEBI:37565"/>
    </ligand>
</feature>
<feature type="binding site" evidence="1">
    <location>
        <position position="65"/>
    </location>
    <ligand>
        <name>Mg(2+)</name>
        <dbReference type="ChEBI" id="CHEBI:18420"/>
    </ligand>
</feature>
<feature type="binding site" evidence="1">
    <location>
        <begin position="81"/>
        <end position="84"/>
    </location>
    <ligand>
        <name>GTP</name>
        <dbReference type="ChEBI" id="CHEBI:37565"/>
    </ligand>
</feature>
<feature type="binding site" evidence="1">
    <location>
        <begin position="148"/>
        <end position="151"/>
    </location>
    <ligand>
        <name>GTP</name>
        <dbReference type="ChEBI" id="CHEBI:37565"/>
    </ligand>
</feature>
<feature type="binding site" evidence="1">
    <location>
        <begin position="180"/>
        <end position="182"/>
    </location>
    <ligand>
        <name>GTP</name>
        <dbReference type="ChEBI" id="CHEBI:37565"/>
    </ligand>
</feature>
<accession>Q9A088</accession>
<accession>Q48ZA8</accession>
<dbReference type="EMBL" id="AE004092">
    <property type="protein sequence ID" value="AAK33806.1"/>
    <property type="molecule type" value="Genomic_DNA"/>
</dbReference>
<dbReference type="EMBL" id="CP000017">
    <property type="protein sequence ID" value="AAZ51310.1"/>
    <property type="molecule type" value="Genomic_DNA"/>
</dbReference>
<dbReference type="RefSeq" id="NP_269085.1">
    <property type="nucleotide sequence ID" value="NC_002737.2"/>
</dbReference>
<dbReference type="SMR" id="Q9A088"/>
<dbReference type="PaxDb" id="1314-HKU360_00701"/>
<dbReference type="KEGG" id="spy:SPy_0886"/>
<dbReference type="KEGG" id="spz:M5005_Spy0692"/>
<dbReference type="PATRIC" id="fig|160490.10.peg.762"/>
<dbReference type="HOGENOM" id="CLU_033732_3_0_9"/>
<dbReference type="OMA" id="AKVDQCP"/>
<dbReference type="Proteomes" id="UP000000750">
    <property type="component" value="Chromosome"/>
</dbReference>
<dbReference type="GO" id="GO:0005829">
    <property type="term" value="C:cytosol"/>
    <property type="evidence" value="ECO:0007669"/>
    <property type="project" value="TreeGrafter"/>
</dbReference>
<dbReference type="GO" id="GO:0005525">
    <property type="term" value="F:GTP binding"/>
    <property type="evidence" value="ECO:0007669"/>
    <property type="project" value="UniProtKB-UniRule"/>
</dbReference>
<dbReference type="GO" id="GO:0046872">
    <property type="term" value="F:metal ion binding"/>
    <property type="evidence" value="ECO:0007669"/>
    <property type="project" value="UniProtKB-KW"/>
</dbReference>
<dbReference type="GO" id="GO:0000917">
    <property type="term" value="P:division septum assembly"/>
    <property type="evidence" value="ECO:0007669"/>
    <property type="project" value="UniProtKB-KW"/>
</dbReference>
<dbReference type="CDD" id="cd01876">
    <property type="entry name" value="YihA_EngB"/>
    <property type="match status" value="1"/>
</dbReference>
<dbReference type="FunFam" id="3.40.50.300:FF:000098">
    <property type="entry name" value="Probable GTP-binding protein EngB"/>
    <property type="match status" value="1"/>
</dbReference>
<dbReference type="Gene3D" id="3.40.50.300">
    <property type="entry name" value="P-loop containing nucleotide triphosphate hydrolases"/>
    <property type="match status" value="1"/>
</dbReference>
<dbReference type="HAMAP" id="MF_00321">
    <property type="entry name" value="GTPase_EngB"/>
    <property type="match status" value="1"/>
</dbReference>
<dbReference type="InterPro" id="IPR030393">
    <property type="entry name" value="G_ENGB_dom"/>
</dbReference>
<dbReference type="InterPro" id="IPR006073">
    <property type="entry name" value="GTP-bd"/>
</dbReference>
<dbReference type="InterPro" id="IPR019987">
    <property type="entry name" value="GTP-bd_ribosome_bio_YsxC"/>
</dbReference>
<dbReference type="InterPro" id="IPR027417">
    <property type="entry name" value="P-loop_NTPase"/>
</dbReference>
<dbReference type="InterPro" id="IPR005225">
    <property type="entry name" value="Small_GTP-bd"/>
</dbReference>
<dbReference type="NCBIfam" id="TIGR03598">
    <property type="entry name" value="GTPase_YsxC"/>
    <property type="match status" value="1"/>
</dbReference>
<dbReference type="NCBIfam" id="TIGR00231">
    <property type="entry name" value="small_GTP"/>
    <property type="match status" value="1"/>
</dbReference>
<dbReference type="PANTHER" id="PTHR11649:SF13">
    <property type="entry name" value="ENGB-TYPE G DOMAIN-CONTAINING PROTEIN"/>
    <property type="match status" value="1"/>
</dbReference>
<dbReference type="PANTHER" id="PTHR11649">
    <property type="entry name" value="MSS1/TRME-RELATED GTP-BINDING PROTEIN"/>
    <property type="match status" value="1"/>
</dbReference>
<dbReference type="Pfam" id="PF01926">
    <property type="entry name" value="MMR_HSR1"/>
    <property type="match status" value="1"/>
</dbReference>
<dbReference type="SUPFAM" id="SSF52540">
    <property type="entry name" value="P-loop containing nucleoside triphosphate hydrolases"/>
    <property type="match status" value="1"/>
</dbReference>
<dbReference type="PROSITE" id="PS51706">
    <property type="entry name" value="G_ENGB"/>
    <property type="match status" value="1"/>
</dbReference>
<evidence type="ECO:0000255" key="1">
    <source>
        <dbReference type="HAMAP-Rule" id="MF_00321"/>
    </source>
</evidence>
<name>ENGB_STRP1</name>
<comment type="function">
    <text evidence="1">Necessary for normal cell division and for the maintenance of normal septation.</text>
</comment>
<comment type="cofactor">
    <cofactor evidence="1">
        <name>Mg(2+)</name>
        <dbReference type="ChEBI" id="CHEBI:18420"/>
    </cofactor>
</comment>
<comment type="similarity">
    <text evidence="1">Belongs to the TRAFAC class TrmE-Era-EngA-EngB-Septin-like GTPase superfamily. EngB GTPase family.</text>
</comment>